<organism>
    <name type="scientific">Geobacillus stearothermophilus</name>
    <name type="common">Bacillus stearothermophilus</name>
    <dbReference type="NCBI Taxonomy" id="1422"/>
    <lineage>
        <taxon>Bacteria</taxon>
        <taxon>Bacillati</taxon>
        <taxon>Bacillota</taxon>
        <taxon>Bacilli</taxon>
        <taxon>Bacillales</taxon>
        <taxon>Anoxybacillaceae</taxon>
        <taxon>Geobacillus</taxon>
    </lineage>
</organism>
<dbReference type="EC" id="2.4.2.1" evidence="2"/>
<dbReference type="EMBL" id="D87960">
    <property type="protein sequence ID" value="BAA13510.1"/>
    <property type="molecule type" value="Genomic_DNA"/>
</dbReference>
<dbReference type="PIR" id="JC5563">
    <property type="entry name" value="JT0874"/>
</dbReference>
<dbReference type="SMR" id="P77835"/>
<dbReference type="BRENDA" id="2.4.2.1">
    <property type="organism ID" value="623"/>
</dbReference>
<dbReference type="GO" id="GO:0005829">
    <property type="term" value="C:cytosol"/>
    <property type="evidence" value="ECO:0007669"/>
    <property type="project" value="TreeGrafter"/>
</dbReference>
<dbReference type="GO" id="GO:0004731">
    <property type="term" value="F:purine-nucleoside phosphorylase activity"/>
    <property type="evidence" value="ECO:0007669"/>
    <property type="project" value="UniProtKB-UniRule"/>
</dbReference>
<dbReference type="GO" id="GO:0006152">
    <property type="term" value="P:purine nucleoside catabolic process"/>
    <property type="evidence" value="ECO:0007669"/>
    <property type="project" value="TreeGrafter"/>
</dbReference>
<dbReference type="CDD" id="cd09006">
    <property type="entry name" value="PNP_EcPNPI-like"/>
    <property type="match status" value="1"/>
</dbReference>
<dbReference type="Gene3D" id="3.40.50.1580">
    <property type="entry name" value="Nucleoside phosphorylase domain"/>
    <property type="match status" value="1"/>
</dbReference>
<dbReference type="HAMAP" id="MF_01627">
    <property type="entry name" value="Pur_nucleosid_phosp"/>
    <property type="match status" value="1"/>
</dbReference>
<dbReference type="InterPro" id="IPR004402">
    <property type="entry name" value="DeoD-type"/>
</dbReference>
<dbReference type="InterPro" id="IPR018016">
    <property type="entry name" value="Nucleoside_phosphorylase_CS"/>
</dbReference>
<dbReference type="InterPro" id="IPR000845">
    <property type="entry name" value="Nucleoside_phosphorylase_d"/>
</dbReference>
<dbReference type="InterPro" id="IPR035994">
    <property type="entry name" value="Nucleoside_phosphorylase_sf"/>
</dbReference>
<dbReference type="NCBIfam" id="TIGR00107">
    <property type="entry name" value="deoD"/>
    <property type="match status" value="1"/>
</dbReference>
<dbReference type="NCBIfam" id="NF004489">
    <property type="entry name" value="PRK05819.1"/>
    <property type="match status" value="1"/>
</dbReference>
<dbReference type="PANTHER" id="PTHR43691:SF11">
    <property type="entry name" value="FI09636P-RELATED"/>
    <property type="match status" value="1"/>
</dbReference>
<dbReference type="PANTHER" id="PTHR43691">
    <property type="entry name" value="URIDINE PHOSPHORYLASE"/>
    <property type="match status" value="1"/>
</dbReference>
<dbReference type="Pfam" id="PF01048">
    <property type="entry name" value="PNP_UDP_1"/>
    <property type="match status" value="1"/>
</dbReference>
<dbReference type="SUPFAM" id="SSF53167">
    <property type="entry name" value="Purine and uridine phosphorylases"/>
    <property type="match status" value="1"/>
</dbReference>
<dbReference type="PROSITE" id="PS01232">
    <property type="entry name" value="PNP_UDP_1"/>
    <property type="match status" value="1"/>
</dbReference>
<accession>P77835</accession>
<comment type="function">
    <text evidence="2">Catalyzes the reversible phosphorolytic breakdown of the N-glycosidic bond in the beta-(deoxy)ribonucleoside molecules, with the formation of the corresponding free purine bases and pentose-1-phosphate.</text>
</comment>
<comment type="function">
    <text>Cleavage of adenosine and its derivatives.</text>
</comment>
<comment type="catalytic activity">
    <reaction evidence="2">
        <text>a purine D-ribonucleoside + phosphate = a purine nucleobase + alpha-D-ribose 1-phosphate</text>
        <dbReference type="Rhea" id="RHEA:19805"/>
        <dbReference type="ChEBI" id="CHEBI:26386"/>
        <dbReference type="ChEBI" id="CHEBI:43474"/>
        <dbReference type="ChEBI" id="CHEBI:57720"/>
        <dbReference type="ChEBI" id="CHEBI:142355"/>
        <dbReference type="EC" id="2.4.2.1"/>
    </reaction>
</comment>
<comment type="catalytic activity">
    <reaction evidence="2">
        <text>a purine 2'-deoxy-D-ribonucleoside + phosphate = a purine nucleobase + 2-deoxy-alpha-D-ribose 1-phosphate</text>
        <dbReference type="Rhea" id="RHEA:36431"/>
        <dbReference type="ChEBI" id="CHEBI:26386"/>
        <dbReference type="ChEBI" id="CHEBI:43474"/>
        <dbReference type="ChEBI" id="CHEBI:57259"/>
        <dbReference type="ChEBI" id="CHEBI:142361"/>
        <dbReference type="EC" id="2.4.2.1"/>
    </reaction>
</comment>
<comment type="subunit">
    <text evidence="2">Homohexamer; trimer of homodimers.</text>
</comment>
<comment type="similarity">
    <text evidence="2 3">Belongs to the PNP/UDP phosphorylase family.</text>
</comment>
<keyword id="KW-0328">Glycosyltransferase</keyword>
<keyword id="KW-0808">Transferase</keyword>
<protein>
    <recommendedName>
        <fullName evidence="2">Purine nucleoside phosphorylase DeoD-type</fullName>
        <shortName evidence="2">PNP</shortName>
        <ecNumber evidence="2">2.4.2.1</ecNumber>
    </recommendedName>
    <alternativeName>
        <fullName>Purine nucleoside phosphorylase II</fullName>
        <shortName>PU-NPase II</shortName>
    </alternativeName>
</protein>
<gene>
    <name evidence="2" type="primary">deoD</name>
    <name type="synonym">punB</name>
</gene>
<proteinExistence type="evidence at protein level"/>
<sequence>MSVHIGAKEHEIADKILLPGDPLRAKYIAETFLEGATCYNQVRGMLGFTGTYKGHRISVQGTGMGVPSISIYITELMQSYNVQTLIRVGTCGAIQKDVKVRDVILAMTSSTDSQMNRMTFGGIDYAPTANFDLLKTAYEIGKEKGLQLKVGSVFTADMFYNENAQFEKLARYGVLAVEMETTALYTLAAKFGRKALSVLTVSDHILTGEETTAEERQTTFNEMIEVALETAIRQ</sequence>
<evidence type="ECO:0000250" key="1">
    <source>
        <dbReference type="UniProtKB" id="P50389"/>
    </source>
</evidence>
<evidence type="ECO:0000255" key="2">
    <source>
        <dbReference type="HAMAP-Rule" id="MF_01627"/>
    </source>
</evidence>
<evidence type="ECO:0000305" key="3"/>
<name>DEOD_GEOSE</name>
<reference key="1">
    <citation type="journal article" date="1997" name="Biosci. Biotechnol. Biochem.">
        <title>Cloning of purine nucleoside phosphorylase II gene from Bacillus stearothermophilus TH 6-2 and characterization of its gene product.</title>
        <authorList>
            <person name="Hamamoto T."/>
            <person name="Noguchi T."/>
            <person name="Midorikawa Y."/>
        </authorList>
    </citation>
    <scope>NUCLEOTIDE SEQUENCE [GENOMIC DNA]</scope>
    <scope>CHARACTERIZATION</scope>
    <source>
        <strain>TH 6-2</strain>
    </source>
</reference>
<feature type="chain" id="PRO_0000063120" description="Purine nucleoside phosphorylase DeoD-type">
    <location>
        <begin position="1"/>
        <end position="234"/>
    </location>
</feature>
<feature type="active site" description="Proton donor" evidence="2">
    <location>
        <position position="203"/>
    </location>
</feature>
<feature type="binding site" evidence="1">
    <location>
        <position position="4"/>
    </location>
    <ligand>
        <name>a purine D-ribonucleoside</name>
        <dbReference type="ChEBI" id="CHEBI:142355"/>
        <note>ligand shared between dimeric partners</note>
    </ligand>
</feature>
<feature type="binding site" description="in other chain" evidence="1">
    <location>
        <position position="20"/>
    </location>
    <ligand>
        <name>phosphate</name>
        <dbReference type="ChEBI" id="CHEBI:43474"/>
        <note>ligand shared between dimeric partners</note>
    </ligand>
</feature>
<feature type="binding site" description="in other chain" evidence="1">
    <location>
        <position position="24"/>
    </location>
    <ligand>
        <name>phosphate</name>
        <dbReference type="ChEBI" id="CHEBI:43474"/>
        <note>ligand shared between dimeric partners</note>
    </ligand>
</feature>
<feature type="binding site" evidence="1">
    <location>
        <position position="43"/>
    </location>
    <ligand>
        <name>phosphate</name>
        <dbReference type="ChEBI" id="CHEBI:43474"/>
        <note>ligand shared between dimeric partners</note>
    </ligand>
</feature>
<feature type="binding site" description="in other chain" evidence="1">
    <location>
        <begin position="87"/>
        <end position="90"/>
    </location>
    <ligand>
        <name>phosphate</name>
        <dbReference type="ChEBI" id="CHEBI:43474"/>
        <note>ligand shared between dimeric partners</note>
    </ligand>
</feature>
<feature type="binding site" description="in other chain" evidence="1">
    <location>
        <position position="162"/>
    </location>
    <ligand>
        <name>a purine D-ribonucleoside</name>
        <dbReference type="ChEBI" id="CHEBI:142355"/>
        <note>ligand shared between dimeric partners</note>
    </ligand>
</feature>
<feature type="binding site" description="in other chain" evidence="1">
    <location>
        <begin position="178"/>
        <end position="180"/>
    </location>
    <ligand>
        <name>a purine D-ribonucleoside</name>
        <dbReference type="ChEBI" id="CHEBI:142355"/>
        <note>ligand shared between dimeric partners</note>
    </ligand>
</feature>
<feature type="binding site" description="in other chain" evidence="1">
    <location>
        <begin position="202"/>
        <end position="203"/>
    </location>
    <ligand>
        <name>a purine D-ribonucleoside</name>
        <dbReference type="ChEBI" id="CHEBI:142355"/>
        <note>ligand shared between dimeric partners</note>
    </ligand>
</feature>
<feature type="site" description="Important for catalytic activity" evidence="2">
    <location>
        <position position="216"/>
    </location>
</feature>